<sequence>MINTNMKYWSWMGAFSLSMLFWAELLWIITH</sequence>
<organism>
    <name type="scientific">Escherichia coli (strain K12)</name>
    <dbReference type="NCBI Taxonomy" id="83333"/>
    <lineage>
        <taxon>Bacteria</taxon>
        <taxon>Pseudomonadati</taxon>
        <taxon>Pseudomonadota</taxon>
        <taxon>Gammaproteobacteria</taxon>
        <taxon>Enterobacterales</taxon>
        <taxon>Enterobacteriaceae</taxon>
        <taxon>Escherichia</taxon>
    </lineage>
</organism>
<feature type="chain" id="PRO_0000445169" description="Protein YmiC">
    <location>
        <begin position="1"/>
        <end position="31"/>
    </location>
</feature>
<feature type="transmembrane region" description="Helical" evidence="1">
    <location>
        <begin position="9"/>
        <end position="29"/>
    </location>
</feature>
<keyword id="KW-0997">Cell inner membrane</keyword>
<keyword id="KW-1003">Cell membrane</keyword>
<keyword id="KW-0472">Membrane</keyword>
<keyword id="KW-1185">Reference proteome</keyword>
<keyword id="KW-0812">Transmembrane</keyword>
<keyword id="KW-1133">Transmembrane helix</keyword>
<reference key="1">
    <citation type="journal article" date="1997" name="Science">
        <title>The complete genome sequence of Escherichia coli K-12.</title>
        <authorList>
            <person name="Blattner F.R."/>
            <person name="Plunkett G. III"/>
            <person name="Bloch C.A."/>
            <person name="Perna N.T."/>
            <person name="Burland V."/>
            <person name="Riley M."/>
            <person name="Collado-Vides J."/>
            <person name="Glasner J.D."/>
            <person name="Rode C.K."/>
            <person name="Mayhew G.F."/>
            <person name="Gregor J."/>
            <person name="Davis N.W."/>
            <person name="Kirkpatrick H.A."/>
            <person name="Goeden M.A."/>
            <person name="Rose D.J."/>
            <person name="Mau B."/>
            <person name="Shao Y."/>
        </authorList>
    </citation>
    <scope>NUCLEOTIDE SEQUENCE [LARGE SCALE GENOMIC DNA]</scope>
    <source>
        <strain>K12 / MG1655 / ATCC 47076</strain>
    </source>
</reference>
<reference key="2">
    <citation type="journal article" date="2018" name="Proteomics">
        <title>Identifying new small proteins in Escherichia coli.</title>
        <authorList>
            <person name="VanOrsdel C.E."/>
            <person name="Kelly J.P."/>
            <person name="Burke B.N."/>
            <person name="Lein C.D."/>
            <person name="Oufiero C.E."/>
            <person name="Sanchez J.F."/>
            <person name="Wimmers L.E."/>
            <person name="Hearn D.J."/>
            <person name="Abuikhdair F.J."/>
            <person name="Barnhart K.R."/>
            <person name="Duley M.L."/>
            <person name="Ernst S.E.G."/>
            <person name="Kenerson B.A."/>
            <person name="Serafin A.J."/>
            <person name="Hemm M.R."/>
        </authorList>
    </citation>
    <scope>IDENTIFICATION</scope>
    <scope>INDUCTION</scope>
</reference>
<protein>
    <recommendedName>
        <fullName evidence="3">Protein YmiC</fullName>
    </recommendedName>
</protein>
<accession>P0DPO1</accession>
<accession>A0A385XJF8</accession>
<gene>
    <name evidence="3" type="primary">ymiC</name>
    <name type="ordered locus">b4741</name>
</gene>
<proteinExistence type="evidence at protein level"/>
<dbReference type="EMBL" id="U00096">
    <property type="protein sequence ID" value="AYC08199.1"/>
    <property type="molecule type" value="Genomic_DNA"/>
</dbReference>
<dbReference type="EnsemblBacteria" id="AYC08199">
    <property type="protein sequence ID" value="AYC08199"/>
    <property type="gene ID" value="b4741"/>
</dbReference>
<dbReference type="InParanoid" id="P0DPO1"/>
<dbReference type="OrthoDB" id="6571274at2"/>
<dbReference type="BioCyc" id="EcoCyc:MONOMER0-4418"/>
<dbReference type="PRO" id="PR:P0DPO1"/>
<dbReference type="Proteomes" id="UP000000625">
    <property type="component" value="Chromosome"/>
</dbReference>
<dbReference type="GO" id="GO:0005886">
    <property type="term" value="C:plasma membrane"/>
    <property type="evidence" value="ECO:0007669"/>
    <property type="project" value="UniProtKB-SubCell"/>
</dbReference>
<dbReference type="InterPro" id="IPR048209">
    <property type="entry name" value="YmiC-like"/>
</dbReference>
<dbReference type="NCBIfam" id="NF041484">
    <property type="entry name" value="membrane_YmiC"/>
    <property type="match status" value="1"/>
</dbReference>
<dbReference type="Pfam" id="PF23694">
    <property type="entry name" value="YmiC"/>
    <property type="match status" value="1"/>
</dbReference>
<evidence type="ECO:0000255" key="1"/>
<evidence type="ECO:0000269" key="2">
    <source>
    </source>
</evidence>
<evidence type="ECO:0000303" key="3">
    <source>
    </source>
</evidence>
<evidence type="ECO:0000305" key="4"/>
<name>YMIC_ECOLI</name>
<comment type="subcellular location">
    <subcellularLocation>
        <location evidence="4">Cell inner membrane</location>
        <topology evidence="1">Single-pass membrane protein</topology>
    </subcellularLocation>
</comment>
<comment type="induction">
    <text evidence="2">Expressed during stationary phase (at protein level).</text>
</comment>